<evidence type="ECO:0000255" key="1">
    <source>
        <dbReference type="HAMAP-Rule" id="MF_01396"/>
    </source>
</evidence>
<reference key="1">
    <citation type="submission" date="2002-12" db="EMBL/GenBank/DDBJ databases">
        <title>Complete genome sequence of Vibrio vulnificus CMCP6.</title>
        <authorList>
            <person name="Rhee J.H."/>
            <person name="Kim S.Y."/>
            <person name="Chung S.S."/>
            <person name="Kim J.J."/>
            <person name="Moon Y.H."/>
            <person name="Jeong H."/>
            <person name="Choy H.E."/>
        </authorList>
    </citation>
    <scope>NUCLEOTIDE SEQUENCE [LARGE SCALE GENOMIC DNA]</scope>
    <source>
        <strain>CMCP6</strain>
    </source>
</reference>
<accession>Q8DDH3</accession>
<protein>
    <recommendedName>
        <fullName evidence="1">ATP synthase subunit c</fullName>
    </recommendedName>
    <alternativeName>
        <fullName evidence="1">ATP synthase F(0) sector subunit c</fullName>
    </alternativeName>
    <alternativeName>
        <fullName evidence="1">F-type ATPase subunit c</fullName>
        <shortName evidence="1">F-ATPase subunit c</shortName>
    </alternativeName>
    <alternativeName>
        <fullName evidence="1">Lipid-binding protein</fullName>
    </alternativeName>
</protein>
<feature type="chain" id="PRO_1000184532" description="ATP synthase subunit c">
    <location>
        <begin position="1"/>
        <end position="85"/>
    </location>
</feature>
<feature type="transmembrane region" description="Helical" evidence="1">
    <location>
        <begin position="10"/>
        <end position="30"/>
    </location>
</feature>
<feature type="transmembrane region" description="Helical" evidence="1">
    <location>
        <begin position="53"/>
        <end position="73"/>
    </location>
</feature>
<feature type="site" description="Reversibly protonated during proton transport" evidence="1">
    <location>
        <position position="60"/>
    </location>
</feature>
<gene>
    <name evidence="1" type="primary">atpE</name>
    <name type="ordered locus">VV1_1016</name>
</gene>
<organism>
    <name type="scientific">Vibrio vulnificus (strain CMCP6)</name>
    <dbReference type="NCBI Taxonomy" id="216895"/>
    <lineage>
        <taxon>Bacteria</taxon>
        <taxon>Pseudomonadati</taxon>
        <taxon>Pseudomonadota</taxon>
        <taxon>Gammaproteobacteria</taxon>
        <taxon>Vibrionales</taxon>
        <taxon>Vibrionaceae</taxon>
        <taxon>Vibrio</taxon>
    </lineage>
</organism>
<keyword id="KW-0066">ATP synthesis</keyword>
<keyword id="KW-0997">Cell inner membrane</keyword>
<keyword id="KW-1003">Cell membrane</keyword>
<keyword id="KW-0138">CF(0)</keyword>
<keyword id="KW-0375">Hydrogen ion transport</keyword>
<keyword id="KW-0406">Ion transport</keyword>
<keyword id="KW-0446">Lipid-binding</keyword>
<keyword id="KW-0472">Membrane</keyword>
<keyword id="KW-0812">Transmembrane</keyword>
<keyword id="KW-1133">Transmembrane helix</keyword>
<keyword id="KW-0813">Transport</keyword>
<name>ATPL_VIBVU</name>
<proteinExistence type="inferred from homology"/>
<dbReference type="EMBL" id="AE016795">
    <property type="protein sequence ID" value="AAO09504.1"/>
    <property type="molecule type" value="Genomic_DNA"/>
</dbReference>
<dbReference type="RefSeq" id="WP_011079050.1">
    <property type="nucleotide sequence ID" value="NC_004459.3"/>
</dbReference>
<dbReference type="SMR" id="Q8DDH3"/>
<dbReference type="GeneID" id="95678623"/>
<dbReference type="KEGG" id="vvu:VV1_1016"/>
<dbReference type="HOGENOM" id="CLU_148047_1_0_6"/>
<dbReference type="Proteomes" id="UP000002275">
    <property type="component" value="Chromosome 1"/>
</dbReference>
<dbReference type="GO" id="GO:0005886">
    <property type="term" value="C:plasma membrane"/>
    <property type="evidence" value="ECO:0007669"/>
    <property type="project" value="UniProtKB-SubCell"/>
</dbReference>
<dbReference type="GO" id="GO:0045259">
    <property type="term" value="C:proton-transporting ATP synthase complex"/>
    <property type="evidence" value="ECO:0007669"/>
    <property type="project" value="UniProtKB-KW"/>
</dbReference>
<dbReference type="GO" id="GO:0033177">
    <property type="term" value="C:proton-transporting two-sector ATPase complex, proton-transporting domain"/>
    <property type="evidence" value="ECO:0007669"/>
    <property type="project" value="InterPro"/>
</dbReference>
<dbReference type="GO" id="GO:0008289">
    <property type="term" value="F:lipid binding"/>
    <property type="evidence" value="ECO:0007669"/>
    <property type="project" value="UniProtKB-KW"/>
</dbReference>
<dbReference type="GO" id="GO:0046933">
    <property type="term" value="F:proton-transporting ATP synthase activity, rotational mechanism"/>
    <property type="evidence" value="ECO:0007669"/>
    <property type="project" value="UniProtKB-UniRule"/>
</dbReference>
<dbReference type="CDD" id="cd18185">
    <property type="entry name" value="ATP-synt_Fo_c_ATPE"/>
    <property type="match status" value="1"/>
</dbReference>
<dbReference type="FunFam" id="1.20.20.10:FF:000002">
    <property type="entry name" value="ATP synthase subunit c"/>
    <property type="match status" value="1"/>
</dbReference>
<dbReference type="Gene3D" id="1.20.20.10">
    <property type="entry name" value="F1F0 ATP synthase subunit C"/>
    <property type="match status" value="1"/>
</dbReference>
<dbReference type="HAMAP" id="MF_01396">
    <property type="entry name" value="ATP_synth_c_bact"/>
    <property type="match status" value="1"/>
</dbReference>
<dbReference type="InterPro" id="IPR005953">
    <property type="entry name" value="ATP_synth_csu_bac/chlpt"/>
</dbReference>
<dbReference type="InterPro" id="IPR000454">
    <property type="entry name" value="ATP_synth_F0_csu"/>
</dbReference>
<dbReference type="InterPro" id="IPR020537">
    <property type="entry name" value="ATP_synth_F0_csu_DDCD_BS"/>
</dbReference>
<dbReference type="InterPro" id="IPR038662">
    <property type="entry name" value="ATP_synth_F0_csu_sf"/>
</dbReference>
<dbReference type="InterPro" id="IPR002379">
    <property type="entry name" value="ATPase_proteolipid_c-like_dom"/>
</dbReference>
<dbReference type="InterPro" id="IPR035921">
    <property type="entry name" value="F/V-ATP_Csub_sf"/>
</dbReference>
<dbReference type="NCBIfam" id="TIGR01260">
    <property type="entry name" value="ATP_synt_c"/>
    <property type="match status" value="1"/>
</dbReference>
<dbReference type="NCBIfam" id="NF005363">
    <property type="entry name" value="PRK06876.1"/>
    <property type="match status" value="1"/>
</dbReference>
<dbReference type="Pfam" id="PF00137">
    <property type="entry name" value="ATP-synt_C"/>
    <property type="match status" value="1"/>
</dbReference>
<dbReference type="PRINTS" id="PR00124">
    <property type="entry name" value="ATPASEC"/>
</dbReference>
<dbReference type="SUPFAM" id="SSF81333">
    <property type="entry name" value="F1F0 ATP synthase subunit C"/>
    <property type="match status" value="1"/>
</dbReference>
<dbReference type="PROSITE" id="PS00605">
    <property type="entry name" value="ATPASE_C"/>
    <property type="match status" value="1"/>
</dbReference>
<sequence>METVLSFSAIAVAIIVGLCALGTAVGFAVLGGKFLEGAARQPEMAPMLQVKMFIIAGLLDAVPMIGIVIALLFTFANPFVGQLAG</sequence>
<comment type="function">
    <text evidence="1">F(1)F(0) ATP synthase produces ATP from ADP in the presence of a proton or sodium gradient. F-type ATPases consist of two structural domains, F(1) containing the extramembraneous catalytic core and F(0) containing the membrane proton channel, linked together by a central stalk and a peripheral stalk. During catalysis, ATP synthesis in the catalytic domain of F(1) is coupled via a rotary mechanism of the central stalk subunits to proton translocation.</text>
</comment>
<comment type="function">
    <text evidence="1">Key component of the F(0) channel; it plays a direct role in translocation across the membrane. A homomeric c-ring of between 10-14 subunits forms the central stalk rotor element with the F(1) delta and epsilon subunits.</text>
</comment>
<comment type="subunit">
    <text evidence="1">F-type ATPases have 2 components, F(1) - the catalytic core - and F(0) - the membrane proton channel. F(1) has five subunits: alpha(3), beta(3), gamma(1), delta(1), epsilon(1). F(0) has three main subunits: a(1), b(2) and c(10-14). The alpha and beta chains form an alternating ring which encloses part of the gamma chain. F(1) is attached to F(0) by a central stalk formed by the gamma and epsilon chains, while a peripheral stalk is formed by the delta and b chains.</text>
</comment>
<comment type="subcellular location">
    <subcellularLocation>
        <location evidence="1">Cell inner membrane</location>
        <topology evidence="1">Multi-pass membrane protein</topology>
    </subcellularLocation>
</comment>
<comment type="similarity">
    <text evidence="1">Belongs to the ATPase C chain family.</text>
</comment>